<proteinExistence type="inferred from homology"/>
<keyword id="KW-0808">Transferase</keyword>
<feature type="chain" id="PRO_0000300989" description="Formyl-CoA:oxalate CoA-transferase">
    <location>
        <begin position="1"/>
        <end position="416"/>
    </location>
</feature>
<feature type="active site" description="Nucleophile" evidence="2">
    <location>
        <position position="169"/>
    </location>
</feature>
<feature type="binding site" evidence="1">
    <location>
        <begin position="17"/>
        <end position="18"/>
    </location>
    <ligand>
        <name>CoA</name>
        <dbReference type="ChEBI" id="CHEBI:57287"/>
    </ligand>
</feature>
<feature type="binding site" evidence="2">
    <location>
        <position position="38"/>
    </location>
    <ligand>
        <name>CoA</name>
        <dbReference type="ChEBI" id="CHEBI:57287"/>
    </ligand>
</feature>
<feature type="binding site" evidence="1">
    <location>
        <begin position="72"/>
        <end position="75"/>
    </location>
    <ligand>
        <name>CoA</name>
        <dbReference type="ChEBI" id="CHEBI:57287"/>
    </ligand>
</feature>
<feature type="binding site" evidence="1">
    <location>
        <begin position="96"/>
        <end position="98"/>
    </location>
    <ligand>
        <name>CoA</name>
        <dbReference type="ChEBI" id="CHEBI:57287"/>
    </ligand>
</feature>
<feature type="binding site" evidence="2">
    <location>
        <position position="104"/>
    </location>
    <ligand>
        <name>CoA</name>
        <dbReference type="ChEBI" id="CHEBI:57287"/>
    </ligand>
</feature>
<feature type="binding site" evidence="1">
    <location>
        <begin position="137"/>
        <end position="140"/>
    </location>
    <ligand>
        <name>CoA</name>
        <dbReference type="ChEBI" id="CHEBI:57287"/>
    </ligand>
</feature>
<feature type="binding site" evidence="1">
    <location>
        <begin position="248"/>
        <end position="250"/>
    </location>
    <ligand>
        <name>substrate</name>
    </ligand>
</feature>
<feature type="binding site" evidence="1">
    <location>
        <begin position="273"/>
        <end position="275"/>
    </location>
    <ligand>
        <name>CoA</name>
        <dbReference type="ChEBI" id="CHEBI:57287"/>
    </ligand>
</feature>
<evidence type="ECO:0000250" key="1"/>
<evidence type="ECO:0000255" key="2">
    <source>
        <dbReference type="HAMAP-Rule" id="MF_00742"/>
    </source>
</evidence>
<protein>
    <recommendedName>
        <fullName>Formyl-CoA:oxalate CoA-transferase</fullName>
        <shortName>FCOCT</shortName>
        <ecNumber evidence="2">2.8.3.16</ecNumber>
    </recommendedName>
    <alternativeName>
        <fullName evidence="2">Formyl-coenzyme A transferase</fullName>
        <shortName evidence="2">Formyl-CoA transferase</shortName>
    </alternativeName>
</protein>
<dbReference type="EC" id="2.8.3.16" evidence="2"/>
<dbReference type="EMBL" id="CP000247">
    <property type="protein sequence ID" value="ABG70392.1"/>
    <property type="molecule type" value="Genomic_DNA"/>
</dbReference>
<dbReference type="RefSeq" id="WP_000106759.1">
    <property type="nucleotide sequence ID" value="NC_008253.1"/>
</dbReference>
<dbReference type="SMR" id="Q0TF87"/>
<dbReference type="GeneID" id="75202557"/>
<dbReference type="KEGG" id="ecp:ECP_2399"/>
<dbReference type="HOGENOM" id="CLU_033975_2_1_6"/>
<dbReference type="UniPathway" id="UPA00540">
    <property type="reaction ID" value="UER00598"/>
</dbReference>
<dbReference type="Proteomes" id="UP000009182">
    <property type="component" value="Chromosome"/>
</dbReference>
<dbReference type="GO" id="GO:0033608">
    <property type="term" value="F:formyl-CoA transferase activity"/>
    <property type="evidence" value="ECO:0007669"/>
    <property type="project" value="UniProtKB-EC"/>
</dbReference>
<dbReference type="GO" id="GO:0033611">
    <property type="term" value="P:oxalate catabolic process"/>
    <property type="evidence" value="ECO:0007669"/>
    <property type="project" value="UniProtKB-UniRule"/>
</dbReference>
<dbReference type="Gene3D" id="3.40.50.10540">
    <property type="entry name" value="Crotonobetainyl-coa:carnitine coa-transferase, domain 1"/>
    <property type="match status" value="1"/>
</dbReference>
<dbReference type="Gene3D" id="3.30.1540.10">
    <property type="entry name" value="formyl-coa transferase, domain 3"/>
    <property type="match status" value="1"/>
</dbReference>
<dbReference type="HAMAP" id="MF_00742">
    <property type="entry name" value="Formyl_CoA_transfer"/>
    <property type="match status" value="1"/>
</dbReference>
<dbReference type="InterPro" id="IPR050483">
    <property type="entry name" value="CoA-transferase_III_domain"/>
</dbReference>
<dbReference type="InterPro" id="IPR003673">
    <property type="entry name" value="CoA-Trfase_fam_III"/>
</dbReference>
<dbReference type="InterPro" id="IPR044855">
    <property type="entry name" value="CoA-Trfase_III_dom3_sf"/>
</dbReference>
<dbReference type="InterPro" id="IPR023606">
    <property type="entry name" value="CoA-Trfase_III_dom_1_sf"/>
</dbReference>
<dbReference type="InterPro" id="IPR017659">
    <property type="entry name" value="Formyl_CoA_transfer"/>
</dbReference>
<dbReference type="NCBIfam" id="TIGR03253">
    <property type="entry name" value="oxalate_frc"/>
    <property type="match status" value="1"/>
</dbReference>
<dbReference type="NCBIfam" id="NF003809">
    <property type="entry name" value="PRK05398.1"/>
    <property type="match status" value="1"/>
</dbReference>
<dbReference type="PANTHER" id="PTHR48207">
    <property type="entry name" value="SUCCINATE--HYDROXYMETHYLGLUTARATE COA-TRANSFERASE"/>
    <property type="match status" value="1"/>
</dbReference>
<dbReference type="PANTHER" id="PTHR48207:SF3">
    <property type="entry name" value="SUCCINATE--HYDROXYMETHYLGLUTARATE COA-TRANSFERASE"/>
    <property type="match status" value="1"/>
</dbReference>
<dbReference type="Pfam" id="PF02515">
    <property type="entry name" value="CoA_transf_3"/>
    <property type="match status" value="1"/>
</dbReference>
<dbReference type="SUPFAM" id="SSF89796">
    <property type="entry name" value="CoA-transferase family III (CaiB/BaiF)"/>
    <property type="match status" value="1"/>
</dbReference>
<name>FCTA_ECOL5</name>
<organism>
    <name type="scientific">Escherichia coli O6:K15:H31 (strain 536 / UPEC)</name>
    <dbReference type="NCBI Taxonomy" id="362663"/>
    <lineage>
        <taxon>Bacteria</taxon>
        <taxon>Pseudomonadati</taxon>
        <taxon>Pseudomonadota</taxon>
        <taxon>Gammaproteobacteria</taxon>
        <taxon>Enterobacterales</taxon>
        <taxon>Enterobacteriaceae</taxon>
        <taxon>Escherichia</taxon>
    </lineage>
</organism>
<sequence>MSTPLQGIKVLDFTGVQSGPSCTQMLAWFGADVIKIERPGVGDVTRHQLRDIPDIDALYFTMLNSNKRSIELNTKTAEGKEVMEKLIREADILVENFHPGAIDHMGFTWEHIQEINPRLIFGSIKGFDECSPYVNVKAYENVAQAAGGAASTTGFWDGPPLVSAAALGDSNTGMHLLIGLLAALLHREKTGRGQRVTMSMQDAVLNLCRVKLRDQQRLDKLGYLEEYPQYPNGTFGDAVPRGGNAGGGGQPGWILKCKGWETDPNAYIYFTIQEQNWENTCKAIGKPEWITDPAYSTAHARQPHIFDIFAEIEKYTVTIDKHEAVAYLTQFDIPCAPVLSMKEISLDPSLRQSGSVVEVEQPLRGKYLTVGCPMKFSAFTPDIKAAPLLGEHTAAVLQELGYSDDEIAAMKQNHAI</sequence>
<reference key="1">
    <citation type="journal article" date="2006" name="Mol. Microbiol.">
        <title>Role of pathogenicity island-associated integrases in the genome plasticity of uropathogenic Escherichia coli strain 536.</title>
        <authorList>
            <person name="Hochhut B."/>
            <person name="Wilde C."/>
            <person name="Balling G."/>
            <person name="Middendorf B."/>
            <person name="Dobrindt U."/>
            <person name="Brzuszkiewicz E."/>
            <person name="Gottschalk G."/>
            <person name="Carniel E."/>
            <person name="Hacker J."/>
        </authorList>
    </citation>
    <scope>NUCLEOTIDE SEQUENCE [LARGE SCALE GENOMIC DNA]</scope>
    <source>
        <strain>536 / UPEC</strain>
    </source>
</reference>
<accession>Q0TF87</accession>
<comment type="function">
    <text evidence="1">Involved in the catabolism of oxalate and in the adapatation to low pH via the induction of the oxalate-dependent acid tolerance response (ATR). Catalyzes the transfer of the CoA moiety from formyl-CoA to oxalate (By similarity).</text>
</comment>
<comment type="catalytic activity">
    <reaction evidence="2">
        <text>formyl-CoA + oxalate = oxalyl-CoA + formate</text>
        <dbReference type="Rhea" id="RHEA:16545"/>
        <dbReference type="ChEBI" id="CHEBI:15740"/>
        <dbReference type="ChEBI" id="CHEBI:30623"/>
        <dbReference type="ChEBI" id="CHEBI:57376"/>
        <dbReference type="ChEBI" id="CHEBI:57388"/>
        <dbReference type="EC" id="2.8.3.16"/>
    </reaction>
</comment>
<comment type="pathway">
    <text evidence="2">Metabolic intermediate degradation; oxalate degradation; CO(2) and formate from oxalate: step 1/2.</text>
</comment>
<comment type="subunit">
    <text evidence="2">Homodimer.</text>
</comment>
<comment type="similarity">
    <text evidence="2">Belongs to the CoA-transferase III family. Frc subfamily.</text>
</comment>
<gene>
    <name evidence="2" type="primary">frc</name>
    <name type="ordered locus">ECP_2399</name>
</gene>